<protein>
    <recommendedName>
        <fullName>GTPase IMAP family member 4</fullName>
    </recommendedName>
    <alternativeName>
        <fullName>Immunity-associated nucleotide 1 protein</fullName>
        <shortName>IAN-1</shortName>
    </alternativeName>
    <alternativeName>
        <fullName>Immunity-associated protein 4</fullName>
    </alternativeName>
</protein>
<gene>
    <name type="primary">Gimap4</name>
    <name evidence="9" type="synonym">Ian1</name>
    <name type="synonym">Imap4</name>
</gene>
<name>GIMA4_RAT</name>
<keyword id="KW-0175">Coiled coil</keyword>
<keyword id="KW-0963">Cytoplasm</keyword>
<keyword id="KW-0342">GTP-binding</keyword>
<keyword id="KW-0547">Nucleotide-binding</keyword>
<keyword id="KW-0597">Phosphoprotein</keyword>
<keyword id="KW-1185">Reference proteome</keyword>
<comment type="function">
    <text evidence="1 2">During thymocyte development, may play a role in the regulation of apoptosis (By similarity). GTPase which exhibits a higher affinity for GDP than for GTP (By similarity).</text>
</comment>
<comment type="subunit">
    <text evidence="2">May interact (via IQ domain) with calmodulin/CALM1 only in the absence of Ca(2+) (By similarity). Interacts with BAX, but not with other Bcl-2 family members (By similarity).</text>
</comment>
<comment type="subcellular location">
    <subcellularLocation>
        <location evidence="2">Cytoplasm</location>
        <location evidence="2">Cytosol</location>
    </subcellularLocation>
</comment>
<comment type="tissue specificity">
    <text evidence="8">Primarily expressed in spleen, thymus, heart, lung and intestine and, at lower levels, in liver, kidney, stomach and muscle (PubMed:12031988). In the spleen, expressed in periarteriolar lymphatic sheets (PubMed:12031988). In the thymus, detected in the medulla (PubMed:12031988).</text>
</comment>
<comment type="PTM">
    <text evidence="2">Phosphorylated at very low levels in resting splenocytes. Rapidly and transiently phosphorylated in response to splenocyte activation.</text>
</comment>
<comment type="similarity">
    <text evidence="10">Belongs to the TRAFAC class TrmE-Era-EngA-EngB-Septin-like GTPase superfamily. AIG1/Toc34/Toc159-like paraseptin GTPase family. IAN subfamily.</text>
</comment>
<dbReference type="EMBL" id="AY070268">
    <property type="protein sequence ID" value="AAL59007.1"/>
    <property type="molecule type" value="mRNA"/>
</dbReference>
<dbReference type="RefSeq" id="NP_775176.2">
    <property type="nucleotide sequence ID" value="NM_173153.2"/>
</dbReference>
<dbReference type="SMR" id="Q8K3K9"/>
<dbReference type="FunCoup" id="Q8K3K9">
    <property type="interactions" value="18"/>
</dbReference>
<dbReference type="STRING" id="10116.ENSRNOP00000073865"/>
<dbReference type="iPTMnet" id="Q8K3K9"/>
<dbReference type="PhosphoSitePlus" id="Q8K3K9"/>
<dbReference type="PaxDb" id="10116-ENSRNOP00000038031"/>
<dbReference type="GeneID" id="286938"/>
<dbReference type="KEGG" id="rno:286938"/>
<dbReference type="UCSC" id="RGD:628765">
    <property type="organism name" value="rat"/>
</dbReference>
<dbReference type="AGR" id="RGD:628765"/>
<dbReference type="CTD" id="55303"/>
<dbReference type="RGD" id="628765">
    <property type="gene designation" value="Gimap4"/>
</dbReference>
<dbReference type="eggNOG" id="ENOG502R7PE">
    <property type="taxonomic scope" value="Eukaryota"/>
</dbReference>
<dbReference type="InParanoid" id="Q8K3K9"/>
<dbReference type="OrthoDB" id="63318at9989"/>
<dbReference type="PhylomeDB" id="Q8K3K9"/>
<dbReference type="PRO" id="PR:Q8K3K9"/>
<dbReference type="Proteomes" id="UP000002494">
    <property type="component" value="Unplaced"/>
</dbReference>
<dbReference type="GO" id="GO:0005829">
    <property type="term" value="C:cytosol"/>
    <property type="evidence" value="ECO:0000250"/>
    <property type="project" value="UniProtKB"/>
</dbReference>
<dbReference type="GO" id="GO:0005525">
    <property type="term" value="F:GTP binding"/>
    <property type="evidence" value="ECO:0007669"/>
    <property type="project" value="UniProtKB-KW"/>
</dbReference>
<dbReference type="CDD" id="cd01852">
    <property type="entry name" value="AIG1"/>
    <property type="match status" value="1"/>
</dbReference>
<dbReference type="FunFam" id="3.40.50.300:FF:000366">
    <property type="entry name" value="GTPase, IMAP family member 2"/>
    <property type="match status" value="1"/>
</dbReference>
<dbReference type="Gene3D" id="3.40.50.300">
    <property type="entry name" value="P-loop containing nucleotide triphosphate hydrolases"/>
    <property type="match status" value="1"/>
</dbReference>
<dbReference type="InterPro" id="IPR006703">
    <property type="entry name" value="G_AIG1"/>
</dbReference>
<dbReference type="InterPro" id="IPR045058">
    <property type="entry name" value="GIMA/IAN/Toc"/>
</dbReference>
<dbReference type="InterPro" id="IPR027417">
    <property type="entry name" value="P-loop_NTPase"/>
</dbReference>
<dbReference type="PANTHER" id="PTHR10903:SF182">
    <property type="entry name" value="GTPASE IMAP FAMILY MEMBER 4"/>
    <property type="match status" value="1"/>
</dbReference>
<dbReference type="PANTHER" id="PTHR10903">
    <property type="entry name" value="GTPASE, IMAP FAMILY MEMBER-RELATED"/>
    <property type="match status" value="1"/>
</dbReference>
<dbReference type="Pfam" id="PF04548">
    <property type="entry name" value="AIG1"/>
    <property type="match status" value="1"/>
</dbReference>
<dbReference type="SUPFAM" id="SSF52540">
    <property type="entry name" value="P-loop containing nucleoside triphosphate hydrolases"/>
    <property type="match status" value="1"/>
</dbReference>
<dbReference type="PROSITE" id="PS51720">
    <property type="entry name" value="G_AIG1"/>
    <property type="match status" value="1"/>
</dbReference>
<sequence length="310" mass="35823">MEAQYSGVGSIPENSRSSHELGIQDQGSPQLRIVLLGKTGAGKSSTGNSILGRKAFLSGICAKSITKVCEKGVSIWDGKELVVVDTPGIFDTEVPDADTQKEITRCVALTSPGPHALLLVIPLGCYTVEEHKATRKLLSMFEKKARRFMILLLTRKDDLEDTDIHEYLETAPEVLQELIYEFRNRYCLFNNKASGAEQEEQKRQLLTLVQSMVRENGGKYFTNKMYESAEGVIQKQTWKKKEFYREELERERARIRREYEAEIQDLRDELERERRRARMEREFNENELIFAERQQNARREVENTSMIYLN</sequence>
<reference key="1">
    <citation type="journal article" date="2002" name="Diabetes">
        <title>The diabetes-prone BB rat carries a frameshift mutation in Ian4, a positional candidate of Iddm1.</title>
        <authorList>
            <person name="Hornum L."/>
            <person name="Romer J."/>
            <person name="Markholst H."/>
        </authorList>
    </citation>
    <scope>NUCLEOTIDE SEQUENCE [MRNA]</scope>
    <scope>VARIANT VAL-55</scope>
    <scope>TISSUE SPECIFICITY</scope>
    <source>
        <strain>BB</strain>
        <tissue>Thymus</tissue>
    </source>
</reference>
<reference key="2">
    <citation type="journal article" date="2012" name="Nat. Commun.">
        <title>Quantitative maps of protein phosphorylation sites across 14 different rat organs and tissues.</title>
        <authorList>
            <person name="Lundby A."/>
            <person name="Secher A."/>
            <person name="Lage K."/>
            <person name="Nordsborg N.B."/>
            <person name="Dmytriyev A."/>
            <person name="Lundby C."/>
            <person name="Olsen J.V."/>
        </authorList>
    </citation>
    <scope>IDENTIFICATION BY MASS SPECTROMETRY [LARGE SCALE ANALYSIS]</scope>
</reference>
<evidence type="ECO:0000250" key="1"/>
<evidence type="ECO:0000250" key="2">
    <source>
        <dbReference type="UniProtKB" id="Q99JY3"/>
    </source>
</evidence>
<evidence type="ECO:0000250" key="3">
    <source>
        <dbReference type="UniProtKB" id="Q9NUV9"/>
    </source>
</evidence>
<evidence type="ECO:0000255" key="4"/>
<evidence type="ECO:0000255" key="5">
    <source>
        <dbReference type="PROSITE-ProRule" id="PRU00116"/>
    </source>
</evidence>
<evidence type="ECO:0000255" key="6">
    <source>
        <dbReference type="PROSITE-ProRule" id="PRU01057"/>
    </source>
</evidence>
<evidence type="ECO:0000256" key="7">
    <source>
        <dbReference type="SAM" id="MobiDB-lite"/>
    </source>
</evidence>
<evidence type="ECO:0000269" key="8">
    <source>
    </source>
</evidence>
<evidence type="ECO:0000303" key="9">
    <source>
    </source>
</evidence>
<evidence type="ECO:0000305" key="10"/>
<feature type="chain" id="PRO_0000190989" description="GTPase IMAP family member 4">
    <location>
        <begin position="1"/>
        <end position="310"/>
    </location>
</feature>
<feature type="domain" description="AIG1-type G" evidence="6">
    <location>
        <begin position="28"/>
        <end position="230"/>
    </location>
</feature>
<feature type="domain" description="IQ" evidence="5">
    <location>
        <begin position="233"/>
        <end position="262"/>
    </location>
</feature>
<feature type="region of interest" description="Disordered" evidence="7">
    <location>
        <begin position="1"/>
        <end position="25"/>
    </location>
</feature>
<feature type="region of interest" description="G1" evidence="6">
    <location>
        <begin position="37"/>
        <end position="44"/>
    </location>
</feature>
<feature type="region of interest" description="G2" evidence="6">
    <location>
        <begin position="64"/>
        <end position="68"/>
    </location>
</feature>
<feature type="region of interest" description="G3" evidence="6">
    <location>
        <begin position="85"/>
        <end position="88"/>
    </location>
</feature>
<feature type="region of interest" description="G4" evidence="6">
    <location>
        <begin position="154"/>
        <end position="157"/>
    </location>
</feature>
<feature type="region of interest" description="G5" evidence="6">
    <location>
        <begin position="190"/>
        <end position="192"/>
    </location>
</feature>
<feature type="coiled-coil region" evidence="4">
    <location>
        <begin position="239"/>
        <end position="297"/>
    </location>
</feature>
<feature type="binding site" evidence="3">
    <location>
        <begin position="37"/>
        <end position="45"/>
    </location>
    <ligand>
        <name>GTP</name>
        <dbReference type="ChEBI" id="CHEBI:37565"/>
    </ligand>
</feature>
<feature type="binding site" evidence="3">
    <location>
        <position position="58"/>
    </location>
    <ligand>
        <name>GTP</name>
        <dbReference type="ChEBI" id="CHEBI:37565"/>
    </ligand>
</feature>
<feature type="binding site" evidence="3">
    <location>
        <begin position="155"/>
        <end position="157"/>
    </location>
    <ligand>
        <name>GTP</name>
        <dbReference type="ChEBI" id="CHEBI:37565"/>
    </ligand>
</feature>
<feature type="binding site" evidence="3">
    <location>
        <position position="191"/>
    </location>
    <ligand>
        <name>GTP</name>
        <dbReference type="ChEBI" id="CHEBI:37565"/>
    </ligand>
</feature>
<feature type="sequence variant" evidence="8">
    <original>A</original>
    <variation>V</variation>
    <location>
        <position position="55"/>
    </location>
</feature>
<proteinExistence type="evidence at protein level"/>
<organism>
    <name type="scientific">Rattus norvegicus</name>
    <name type="common">Rat</name>
    <dbReference type="NCBI Taxonomy" id="10116"/>
    <lineage>
        <taxon>Eukaryota</taxon>
        <taxon>Metazoa</taxon>
        <taxon>Chordata</taxon>
        <taxon>Craniata</taxon>
        <taxon>Vertebrata</taxon>
        <taxon>Euteleostomi</taxon>
        <taxon>Mammalia</taxon>
        <taxon>Eutheria</taxon>
        <taxon>Euarchontoglires</taxon>
        <taxon>Glires</taxon>
        <taxon>Rodentia</taxon>
        <taxon>Myomorpha</taxon>
        <taxon>Muroidea</taxon>
        <taxon>Muridae</taxon>
        <taxon>Murinae</taxon>
        <taxon>Rattus</taxon>
    </lineage>
</organism>
<accession>Q8K3K9</accession>